<keyword id="KW-0998">Cell outer membrane</keyword>
<keyword id="KW-0961">Cell wall biogenesis/degradation</keyword>
<keyword id="KW-0456">Lyase</keyword>
<keyword id="KW-0472">Membrane</keyword>
<keyword id="KW-1185">Reference proteome</keyword>
<keyword id="KW-0732">Signal</keyword>
<protein>
    <recommendedName>
        <fullName evidence="1">Membrane-bound lytic murein transglycosylase F</fullName>
        <ecNumber evidence="1">4.2.2.n1</ecNumber>
    </recommendedName>
    <alternativeName>
        <fullName evidence="1">Murein lyase F</fullName>
    </alternativeName>
</protein>
<reference key="1">
    <citation type="submission" date="2006-08" db="EMBL/GenBank/DDBJ databases">
        <title>Complete sequence of Maricaulis maris MCS10.</title>
        <authorList>
            <consortium name="US DOE Joint Genome Institute"/>
            <person name="Copeland A."/>
            <person name="Lucas S."/>
            <person name="Lapidus A."/>
            <person name="Barry K."/>
            <person name="Detter J.C."/>
            <person name="Glavina del Rio T."/>
            <person name="Hammon N."/>
            <person name="Israni S."/>
            <person name="Dalin E."/>
            <person name="Tice H."/>
            <person name="Pitluck S."/>
            <person name="Saunders E."/>
            <person name="Brettin T."/>
            <person name="Bruce D."/>
            <person name="Han C."/>
            <person name="Tapia R."/>
            <person name="Gilna P."/>
            <person name="Schmutz J."/>
            <person name="Larimer F."/>
            <person name="Land M."/>
            <person name="Hauser L."/>
            <person name="Kyrpides N."/>
            <person name="Mikhailova N."/>
            <person name="Viollier P."/>
            <person name="Stephens C."/>
            <person name="Richardson P."/>
        </authorList>
    </citation>
    <scope>NUCLEOTIDE SEQUENCE [LARGE SCALE GENOMIC DNA]</scope>
    <source>
        <strain>MCS10</strain>
    </source>
</reference>
<feature type="signal peptide" evidence="1">
    <location>
        <begin position="1"/>
        <end position="22"/>
    </location>
</feature>
<feature type="chain" id="PRO_5000131754" description="Membrane-bound lytic murein transglycosylase F">
    <location>
        <begin position="23"/>
        <end position="456"/>
    </location>
</feature>
<feature type="region of interest" description="Non-LT domain" evidence="1">
    <location>
        <begin position="23"/>
        <end position="267"/>
    </location>
</feature>
<feature type="region of interest" description="LT domain" evidence="1">
    <location>
        <begin position="268"/>
        <end position="456"/>
    </location>
</feature>
<feature type="active site" evidence="1">
    <location>
        <position position="314"/>
    </location>
</feature>
<sequence>MKTWPSRAVSLLLLALALPVGCSEPPPPVRDPDTLATIRERGELVVLTLAGPTSLIENEDGPPSGYEVDLANAFAASLGVTARFEVAASLPDLFDALAAGDGHVAAAGLTLTPERSERLAFSPVYKSVTEQLVCRRGGVNPTRLERLPDADIVVLEGSSYEETLRAIGVTHTALRWRTRPGGSAMPLLEAVDDGQADCTIADSHLADFARRRHPELIVARNLTGEQPLAWAYDARIDGLGEALSAWFATAHADGLLEALDETWFGRFGDYDYVDVARFVRRVENRLPRYRRLFEAAADELPFEWELLAAQAYQESHWDPDAVSATGVRGLMMLTLSTAERVGIDDRTDPEQSIVGGAAYLDDLYERVPDSVTGPDRLWFALAAYNVGMGHMYDARRLAERLGRDKDSWDDLAEILPLLSDPAHYSTLRYGYARGHEPVRYVAKIREYRALLAAQDL</sequence>
<accession>Q0AQY9</accession>
<organism>
    <name type="scientific">Maricaulis maris (strain MCS10)</name>
    <name type="common">Caulobacter maris</name>
    <dbReference type="NCBI Taxonomy" id="394221"/>
    <lineage>
        <taxon>Bacteria</taxon>
        <taxon>Pseudomonadati</taxon>
        <taxon>Pseudomonadota</taxon>
        <taxon>Alphaproteobacteria</taxon>
        <taxon>Maricaulales</taxon>
        <taxon>Maricaulaceae</taxon>
        <taxon>Maricaulis</taxon>
    </lineage>
</organism>
<gene>
    <name evidence="1" type="primary">mltF</name>
    <name type="ordered locus">Mmar10_1005</name>
</gene>
<comment type="function">
    <text evidence="1">Murein-degrading enzyme that degrades murein glycan strands and insoluble, high-molecular weight murein sacculi, with the concomitant formation of a 1,6-anhydromuramoyl product. Lytic transglycosylases (LTs) play an integral role in the metabolism of the peptidoglycan (PG) sacculus. Their lytic action creates space within the PG sacculus to allow for its expansion as well as for the insertion of various structures such as secretion systems and flagella.</text>
</comment>
<comment type="catalytic activity">
    <reaction evidence="1">
        <text>Exolytic cleavage of the (1-&gt;4)-beta-glycosidic linkage between N-acetylmuramic acid (MurNAc) and N-acetylglucosamine (GlcNAc) residues in peptidoglycan, from either the reducing or the non-reducing ends of the peptidoglycan chains, with concomitant formation of a 1,6-anhydrobond in the MurNAc residue.</text>
        <dbReference type="EC" id="4.2.2.n1"/>
    </reaction>
</comment>
<comment type="subcellular location">
    <subcellularLocation>
        <location>Cell outer membrane</location>
        <topology>Peripheral membrane protein</topology>
    </subcellularLocation>
    <text evidence="1">Attached to the inner leaflet of the outer membrane.</text>
</comment>
<comment type="domain">
    <text evidence="1">The N-terminal domain does not have lytic activity and probably modulates enzymatic activity. The C-terminal domain is the catalytic active domain.</text>
</comment>
<comment type="similarity">
    <text evidence="1">In the N-terminal section; belongs to the bacterial solute-binding protein 3 family.</text>
</comment>
<comment type="similarity">
    <text evidence="1">In the C-terminal section; belongs to the transglycosylase Slt family.</text>
</comment>
<comment type="sequence caution" evidence="2">
    <conflict type="erroneous initiation">
        <sequence resource="EMBL-CDS" id="ABI65298"/>
    </conflict>
</comment>
<name>MLTF_MARMM</name>
<evidence type="ECO:0000255" key="1">
    <source>
        <dbReference type="HAMAP-Rule" id="MF_02016"/>
    </source>
</evidence>
<evidence type="ECO:0000305" key="2"/>
<proteinExistence type="inferred from homology"/>
<dbReference type="EC" id="4.2.2.n1" evidence="1"/>
<dbReference type="EMBL" id="CP000449">
    <property type="protein sequence ID" value="ABI65298.1"/>
    <property type="status" value="ALT_INIT"/>
    <property type="molecule type" value="Genomic_DNA"/>
</dbReference>
<dbReference type="RefSeq" id="WP_011642945.1">
    <property type="nucleotide sequence ID" value="NC_008347.1"/>
</dbReference>
<dbReference type="SMR" id="Q0AQY9"/>
<dbReference type="STRING" id="394221.Mmar10_1005"/>
<dbReference type="CAZy" id="GH23">
    <property type="family name" value="Glycoside Hydrolase Family 23"/>
</dbReference>
<dbReference type="KEGG" id="mmr:Mmar10_1005"/>
<dbReference type="eggNOG" id="COG4623">
    <property type="taxonomic scope" value="Bacteria"/>
</dbReference>
<dbReference type="HOGENOM" id="CLU_027494_0_1_5"/>
<dbReference type="OrthoDB" id="9815002at2"/>
<dbReference type="Proteomes" id="UP000001964">
    <property type="component" value="Chromosome"/>
</dbReference>
<dbReference type="GO" id="GO:0009279">
    <property type="term" value="C:cell outer membrane"/>
    <property type="evidence" value="ECO:0007669"/>
    <property type="project" value="UniProtKB-SubCell"/>
</dbReference>
<dbReference type="GO" id="GO:0008933">
    <property type="term" value="F:peptidoglycan lytic transglycosylase activity"/>
    <property type="evidence" value="ECO:0007669"/>
    <property type="project" value="UniProtKB-UniRule"/>
</dbReference>
<dbReference type="GO" id="GO:0016998">
    <property type="term" value="P:cell wall macromolecule catabolic process"/>
    <property type="evidence" value="ECO:0007669"/>
    <property type="project" value="UniProtKB-UniRule"/>
</dbReference>
<dbReference type="GO" id="GO:0071555">
    <property type="term" value="P:cell wall organization"/>
    <property type="evidence" value="ECO:0007669"/>
    <property type="project" value="UniProtKB-KW"/>
</dbReference>
<dbReference type="GO" id="GO:0009253">
    <property type="term" value="P:peptidoglycan catabolic process"/>
    <property type="evidence" value="ECO:0007669"/>
    <property type="project" value="TreeGrafter"/>
</dbReference>
<dbReference type="CDD" id="cd13403">
    <property type="entry name" value="MLTF-like"/>
    <property type="match status" value="1"/>
</dbReference>
<dbReference type="CDD" id="cd01009">
    <property type="entry name" value="PBP2_YfhD_N"/>
    <property type="match status" value="1"/>
</dbReference>
<dbReference type="Gene3D" id="1.10.530.10">
    <property type="match status" value="1"/>
</dbReference>
<dbReference type="Gene3D" id="3.40.190.10">
    <property type="entry name" value="Periplasmic binding protein-like II"/>
    <property type="match status" value="2"/>
</dbReference>
<dbReference type="HAMAP" id="MF_02016">
    <property type="entry name" value="MltF"/>
    <property type="match status" value="1"/>
</dbReference>
<dbReference type="InterPro" id="IPR023346">
    <property type="entry name" value="Lysozyme-like_dom_sf"/>
</dbReference>
<dbReference type="InterPro" id="IPR023703">
    <property type="entry name" value="MltF"/>
</dbReference>
<dbReference type="InterPro" id="IPR001638">
    <property type="entry name" value="Solute-binding_3/MltF_N"/>
</dbReference>
<dbReference type="InterPro" id="IPR008258">
    <property type="entry name" value="Transglycosylase_SLT_dom_1"/>
</dbReference>
<dbReference type="NCBIfam" id="NF008112">
    <property type="entry name" value="PRK10859.1"/>
    <property type="match status" value="1"/>
</dbReference>
<dbReference type="PANTHER" id="PTHR35936">
    <property type="entry name" value="MEMBRANE-BOUND LYTIC MUREIN TRANSGLYCOSYLASE F"/>
    <property type="match status" value="1"/>
</dbReference>
<dbReference type="PANTHER" id="PTHR35936:SF32">
    <property type="entry name" value="MEMBRANE-BOUND LYTIC MUREIN TRANSGLYCOSYLASE F"/>
    <property type="match status" value="1"/>
</dbReference>
<dbReference type="Pfam" id="PF00497">
    <property type="entry name" value="SBP_bac_3"/>
    <property type="match status" value="1"/>
</dbReference>
<dbReference type="Pfam" id="PF01464">
    <property type="entry name" value="SLT"/>
    <property type="match status" value="1"/>
</dbReference>
<dbReference type="SMART" id="SM00062">
    <property type="entry name" value="PBPb"/>
    <property type="match status" value="1"/>
</dbReference>
<dbReference type="SUPFAM" id="SSF53955">
    <property type="entry name" value="Lysozyme-like"/>
    <property type="match status" value="1"/>
</dbReference>
<dbReference type="SUPFAM" id="SSF53850">
    <property type="entry name" value="Periplasmic binding protein-like II"/>
    <property type="match status" value="1"/>
</dbReference>